<comment type="function">
    <text evidence="1">Cell wall formation.</text>
</comment>
<comment type="catalytic activity">
    <reaction evidence="1">
        <text>UDP-N-acetyl-alpha-D-muramate + L-alanine + ATP = UDP-N-acetyl-alpha-D-muramoyl-L-alanine + ADP + phosphate + H(+)</text>
        <dbReference type="Rhea" id="RHEA:23372"/>
        <dbReference type="ChEBI" id="CHEBI:15378"/>
        <dbReference type="ChEBI" id="CHEBI:30616"/>
        <dbReference type="ChEBI" id="CHEBI:43474"/>
        <dbReference type="ChEBI" id="CHEBI:57972"/>
        <dbReference type="ChEBI" id="CHEBI:70757"/>
        <dbReference type="ChEBI" id="CHEBI:83898"/>
        <dbReference type="ChEBI" id="CHEBI:456216"/>
        <dbReference type="EC" id="6.3.2.8"/>
    </reaction>
</comment>
<comment type="pathway">
    <text evidence="1">Cell wall biogenesis; peptidoglycan biosynthesis.</text>
</comment>
<comment type="subcellular location">
    <subcellularLocation>
        <location evidence="1">Cytoplasm</location>
    </subcellularLocation>
</comment>
<comment type="similarity">
    <text evidence="1">Belongs to the MurCDEF family.</text>
</comment>
<proteinExistence type="inferred from homology"/>
<reference key="1">
    <citation type="journal article" date="2008" name="BMC Genomics">
        <title>Acidithiobacillus ferrooxidans metabolism: from genome sequence to industrial applications.</title>
        <authorList>
            <person name="Valdes J."/>
            <person name="Pedroso I."/>
            <person name="Quatrini R."/>
            <person name="Dodson R.J."/>
            <person name="Tettelin H."/>
            <person name="Blake R. II"/>
            <person name="Eisen J.A."/>
            <person name="Holmes D.S."/>
        </authorList>
    </citation>
    <scope>NUCLEOTIDE SEQUENCE [LARGE SCALE GENOMIC DNA]</scope>
    <source>
        <strain>ATCC 23270 / DSM 14882 / CIP 104768 / NCIMB 8455</strain>
    </source>
</reference>
<keyword id="KW-0067">ATP-binding</keyword>
<keyword id="KW-0131">Cell cycle</keyword>
<keyword id="KW-0132">Cell division</keyword>
<keyword id="KW-0133">Cell shape</keyword>
<keyword id="KW-0961">Cell wall biogenesis/degradation</keyword>
<keyword id="KW-0963">Cytoplasm</keyword>
<keyword id="KW-0436">Ligase</keyword>
<keyword id="KW-0547">Nucleotide-binding</keyword>
<keyword id="KW-0573">Peptidoglycan synthesis</keyword>
<keyword id="KW-1185">Reference proteome</keyword>
<protein>
    <recommendedName>
        <fullName evidence="1">UDP-N-acetylmuramate--L-alanine ligase</fullName>
        <ecNumber evidence="1">6.3.2.8</ecNumber>
    </recommendedName>
    <alternativeName>
        <fullName evidence="1">UDP-N-acetylmuramoyl-L-alanine synthetase</fullName>
    </alternativeName>
</protein>
<organism>
    <name type="scientific">Acidithiobacillus ferrooxidans (strain ATCC 23270 / DSM 14882 / CIP 104768 / NCIMB 8455)</name>
    <name type="common">Ferrobacillus ferrooxidans (strain ATCC 23270)</name>
    <dbReference type="NCBI Taxonomy" id="243159"/>
    <lineage>
        <taxon>Bacteria</taxon>
        <taxon>Pseudomonadati</taxon>
        <taxon>Pseudomonadota</taxon>
        <taxon>Acidithiobacillia</taxon>
        <taxon>Acidithiobacillales</taxon>
        <taxon>Acidithiobacillaceae</taxon>
        <taxon>Acidithiobacillus</taxon>
    </lineage>
</organism>
<feature type="chain" id="PRO_1000116613" description="UDP-N-acetylmuramate--L-alanine ligase">
    <location>
        <begin position="1"/>
        <end position="464"/>
    </location>
</feature>
<feature type="binding site" evidence="1">
    <location>
        <begin position="112"/>
        <end position="118"/>
    </location>
    <ligand>
        <name>ATP</name>
        <dbReference type="ChEBI" id="CHEBI:30616"/>
    </ligand>
</feature>
<name>MURC_ACIF2</name>
<accession>B7J3V1</accession>
<gene>
    <name evidence="1" type="primary">murC</name>
    <name type="ordered locus">AFE_0205</name>
</gene>
<sequence>MRNWVRQIHMVGIGGSGMRGIAEVLLNLGYAVSGSDLRPGNSTLRLTDLGARIFSGHEAANVRGADVVVISSAIPESNPEVQAARELRIPVIRRAEMLAELMRFKQGIAIAGTHGKTTTTSLVASILGAGGLDPTFVIGGRLKSAGTHAALGSGEYLVAEADESDASFLYLSPVMAVVTNIDADHMETYGGSLDNLRGAFLQFLQRLPFYGLAVLCTDEAVVAGLIPELRTPVLRYGFGADADLQARDVTVQGIGSRFAVWRRVDSDYVHWLDVELGIPGRHNVLNALAAIGIASKVGIPESTIATALADFRGVGRRFELVGTFDGITVVDDYGHHPREIAATIAAARSVWPERPLVVAFQPHRYSRTQALFADFVSSLAAADRVILTDIYSAGEKALPGVTGRALAEAMAAQGMSVRFLPDLLTAPQQIRAELPAGAVLLTLGAGSIASLAAQWPQVFGEDPS</sequence>
<dbReference type="EC" id="6.3.2.8" evidence="1"/>
<dbReference type="EMBL" id="CP001219">
    <property type="protein sequence ID" value="ACK80005.1"/>
    <property type="molecule type" value="Genomic_DNA"/>
</dbReference>
<dbReference type="RefSeq" id="WP_009567099.1">
    <property type="nucleotide sequence ID" value="NC_011761.1"/>
</dbReference>
<dbReference type="SMR" id="B7J3V1"/>
<dbReference type="STRING" id="243159.AFE_0205"/>
<dbReference type="PaxDb" id="243159-AFE_0205"/>
<dbReference type="GeneID" id="65279590"/>
<dbReference type="KEGG" id="afr:AFE_0205"/>
<dbReference type="eggNOG" id="COG0773">
    <property type="taxonomic scope" value="Bacteria"/>
</dbReference>
<dbReference type="HOGENOM" id="CLU_028104_2_2_6"/>
<dbReference type="UniPathway" id="UPA00219"/>
<dbReference type="Proteomes" id="UP000001362">
    <property type="component" value="Chromosome"/>
</dbReference>
<dbReference type="GO" id="GO:0005737">
    <property type="term" value="C:cytoplasm"/>
    <property type="evidence" value="ECO:0007669"/>
    <property type="project" value="UniProtKB-SubCell"/>
</dbReference>
<dbReference type="GO" id="GO:0005524">
    <property type="term" value="F:ATP binding"/>
    <property type="evidence" value="ECO:0007669"/>
    <property type="project" value="UniProtKB-UniRule"/>
</dbReference>
<dbReference type="GO" id="GO:0008763">
    <property type="term" value="F:UDP-N-acetylmuramate-L-alanine ligase activity"/>
    <property type="evidence" value="ECO:0007669"/>
    <property type="project" value="UniProtKB-UniRule"/>
</dbReference>
<dbReference type="GO" id="GO:0051301">
    <property type="term" value="P:cell division"/>
    <property type="evidence" value="ECO:0007669"/>
    <property type="project" value="UniProtKB-KW"/>
</dbReference>
<dbReference type="GO" id="GO:0071555">
    <property type="term" value="P:cell wall organization"/>
    <property type="evidence" value="ECO:0007669"/>
    <property type="project" value="UniProtKB-KW"/>
</dbReference>
<dbReference type="GO" id="GO:0009252">
    <property type="term" value="P:peptidoglycan biosynthetic process"/>
    <property type="evidence" value="ECO:0007669"/>
    <property type="project" value="UniProtKB-UniRule"/>
</dbReference>
<dbReference type="GO" id="GO:0008360">
    <property type="term" value="P:regulation of cell shape"/>
    <property type="evidence" value="ECO:0007669"/>
    <property type="project" value="UniProtKB-KW"/>
</dbReference>
<dbReference type="Gene3D" id="3.90.190.20">
    <property type="entry name" value="Mur ligase, C-terminal domain"/>
    <property type="match status" value="1"/>
</dbReference>
<dbReference type="Gene3D" id="3.40.1190.10">
    <property type="entry name" value="Mur-like, catalytic domain"/>
    <property type="match status" value="1"/>
</dbReference>
<dbReference type="Gene3D" id="3.40.50.720">
    <property type="entry name" value="NAD(P)-binding Rossmann-like Domain"/>
    <property type="match status" value="1"/>
</dbReference>
<dbReference type="HAMAP" id="MF_00046">
    <property type="entry name" value="MurC"/>
    <property type="match status" value="1"/>
</dbReference>
<dbReference type="InterPro" id="IPR036565">
    <property type="entry name" value="Mur-like_cat_sf"/>
</dbReference>
<dbReference type="InterPro" id="IPR004101">
    <property type="entry name" value="Mur_ligase_C"/>
</dbReference>
<dbReference type="InterPro" id="IPR036615">
    <property type="entry name" value="Mur_ligase_C_dom_sf"/>
</dbReference>
<dbReference type="InterPro" id="IPR013221">
    <property type="entry name" value="Mur_ligase_cen"/>
</dbReference>
<dbReference type="InterPro" id="IPR000713">
    <property type="entry name" value="Mur_ligase_N"/>
</dbReference>
<dbReference type="InterPro" id="IPR050061">
    <property type="entry name" value="MurCDEF_pg_biosynth"/>
</dbReference>
<dbReference type="InterPro" id="IPR005758">
    <property type="entry name" value="UDP-N-AcMur_Ala_ligase_MurC"/>
</dbReference>
<dbReference type="NCBIfam" id="TIGR01082">
    <property type="entry name" value="murC"/>
    <property type="match status" value="1"/>
</dbReference>
<dbReference type="PANTHER" id="PTHR43445:SF3">
    <property type="entry name" value="UDP-N-ACETYLMURAMATE--L-ALANINE LIGASE"/>
    <property type="match status" value="1"/>
</dbReference>
<dbReference type="PANTHER" id="PTHR43445">
    <property type="entry name" value="UDP-N-ACETYLMURAMATE--L-ALANINE LIGASE-RELATED"/>
    <property type="match status" value="1"/>
</dbReference>
<dbReference type="Pfam" id="PF01225">
    <property type="entry name" value="Mur_ligase"/>
    <property type="match status" value="1"/>
</dbReference>
<dbReference type="Pfam" id="PF02875">
    <property type="entry name" value="Mur_ligase_C"/>
    <property type="match status" value="1"/>
</dbReference>
<dbReference type="Pfam" id="PF08245">
    <property type="entry name" value="Mur_ligase_M"/>
    <property type="match status" value="1"/>
</dbReference>
<dbReference type="SUPFAM" id="SSF51984">
    <property type="entry name" value="MurCD N-terminal domain"/>
    <property type="match status" value="1"/>
</dbReference>
<dbReference type="SUPFAM" id="SSF53623">
    <property type="entry name" value="MurD-like peptide ligases, catalytic domain"/>
    <property type="match status" value="1"/>
</dbReference>
<dbReference type="SUPFAM" id="SSF53244">
    <property type="entry name" value="MurD-like peptide ligases, peptide-binding domain"/>
    <property type="match status" value="1"/>
</dbReference>
<evidence type="ECO:0000255" key="1">
    <source>
        <dbReference type="HAMAP-Rule" id="MF_00046"/>
    </source>
</evidence>